<organism>
    <name type="scientific">Bungarus candidus</name>
    <name type="common">Malayan krait</name>
    <dbReference type="NCBI Taxonomy" id="92438"/>
    <lineage>
        <taxon>Eukaryota</taxon>
        <taxon>Metazoa</taxon>
        <taxon>Chordata</taxon>
        <taxon>Craniata</taxon>
        <taxon>Vertebrata</taxon>
        <taxon>Euteleostomi</taxon>
        <taxon>Lepidosauria</taxon>
        <taxon>Squamata</taxon>
        <taxon>Bifurcata</taxon>
        <taxon>Unidentata</taxon>
        <taxon>Episquamata</taxon>
        <taxon>Toxicofera</taxon>
        <taxon>Serpentes</taxon>
        <taxon>Colubroidea</taxon>
        <taxon>Elapidae</taxon>
        <taxon>Bungarinae</taxon>
        <taxon>Bungarus</taxon>
    </lineage>
</organism>
<dbReference type="EMBL" id="AY057884">
    <property type="protein sequence ID" value="AAL30066.1"/>
    <property type="status" value="ALT_INIT"/>
    <property type="molecule type" value="mRNA"/>
</dbReference>
<dbReference type="SMR" id="Q8AY45"/>
<dbReference type="GO" id="GO:0005615">
    <property type="term" value="C:extracellular space"/>
    <property type="evidence" value="ECO:0007669"/>
    <property type="project" value="TreeGrafter"/>
</dbReference>
<dbReference type="GO" id="GO:0004867">
    <property type="term" value="F:serine-type endopeptidase inhibitor activity"/>
    <property type="evidence" value="ECO:0007669"/>
    <property type="project" value="InterPro"/>
</dbReference>
<dbReference type="GO" id="GO:0090729">
    <property type="term" value="F:toxin activity"/>
    <property type="evidence" value="ECO:0007669"/>
    <property type="project" value="UniProtKB-KW"/>
</dbReference>
<dbReference type="CDD" id="cd22619">
    <property type="entry name" value="Kunitz_B2B"/>
    <property type="match status" value="1"/>
</dbReference>
<dbReference type="Gene3D" id="4.10.410.10">
    <property type="entry name" value="Pancreatic trypsin inhibitor Kunitz domain"/>
    <property type="match status" value="1"/>
</dbReference>
<dbReference type="InterPro" id="IPR002223">
    <property type="entry name" value="Kunitz_BPTI"/>
</dbReference>
<dbReference type="InterPro" id="IPR036880">
    <property type="entry name" value="Kunitz_BPTI_sf"/>
</dbReference>
<dbReference type="InterPro" id="IPR020901">
    <property type="entry name" value="Prtase_inh_Kunz-CS"/>
</dbReference>
<dbReference type="InterPro" id="IPR050098">
    <property type="entry name" value="TFPI/VKTCI-like"/>
</dbReference>
<dbReference type="PANTHER" id="PTHR10083:SF374">
    <property type="entry name" value="BPTI_KUNITZ INHIBITOR DOMAIN-CONTAINING PROTEIN"/>
    <property type="match status" value="1"/>
</dbReference>
<dbReference type="PANTHER" id="PTHR10083">
    <property type="entry name" value="KUNITZ-TYPE PROTEASE INHIBITOR-RELATED"/>
    <property type="match status" value="1"/>
</dbReference>
<dbReference type="Pfam" id="PF00014">
    <property type="entry name" value="Kunitz_BPTI"/>
    <property type="match status" value="1"/>
</dbReference>
<dbReference type="PRINTS" id="PR00759">
    <property type="entry name" value="BASICPTASE"/>
</dbReference>
<dbReference type="SMART" id="SM00131">
    <property type="entry name" value="KU"/>
    <property type="match status" value="1"/>
</dbReference>
<dbReference type="SUPFAM" id="SSF57362">
    <property type="entry name" value="BPTI-like"/>
    <property type="match status" value="1"/>
</dbReference>
<dbReference type="PROSITE" id="PS00280">
    <property type="entry name" value="BPTI_KUNITZ_1"/>
    <property type="match status" value="1"/>
</dbReference>
<dbReference type="PROSITE" id="PS50279">
    <property type="entry name" value="BPTI_KUNITZ_2"/>
    <property type="match status" value="1"/>
</dbReference>
<accession>Q8AY45</accession>
<protein>
    <recommendedName>
        <fullName>Kunitz-type serine protease inhibitor homolog beta-bungarotoxin B2a chain</fullName>
    </recommendedName>
</protein>
<comment type="function">
    <text evidence="1">Beta-bungarotoxin is a presynaptic neurotoxin of the venom. The B chain is homologous to venom basic protease inhibitors but has no protease inhibitor activity and is non-toxic (By similarity).</text>
</comment>
<comment type="subunit">
    <text evidence="1">Heterodimer; disulfide-linked. The A chain has phospholipase A2 activity and the B chain shows homology with the basic protease inhibitors (By similarity).</text>
</comment>
<comment type="subcellular location">
    <subcellularLocation>
        <location evidence="1">Secreted</location>
    </subcellularLocation>
</comment>
<comment type="tissue specificity">
    <text>Expressed by the venom gland.</text>
</comment>
<comment type="similarity">
    <text evidence="3">Belongs to the venom Kunitz-type family.</text>
</comment>
<comment type="sequence caution" evidence="3">
    <conflict type="erroneous initiation">
        <sequence resource="EMBL-CDS" id="AAL30066"/>
    </conflict>
</comment>
<proteinExistence type="evidence at transcript level"/>
<evidence type="ECO:0000250" key="1"/>
<evidence type="ECO:0000255" key="2">
    <source>
        <dbReference type="PROSITE-ProRule" id="PRU00031"/>
    </source>
</evidence>
<evidence type="ECO:0000305" key="3"/>
<keyword id="KW-1015">Disulfide bond</keyword>
<keyword id="KW-0528">Neurotoxin</keyword>
<keyword id="KW-0638">Presynaptic neurotoxin</keyword>
<keyword id="KW-0964">Secreted</keyword>
<keyword id="KW-0732">Signal</keyword>
<keyword id="KW-0800">Toxin</keyword>
<name>VKBH2_BUNCA</name>
<reference key="1">
    <citation type="submission" date="2001-10" db="EMBL/GenBank/DDBJ databases">
        <title>Structural and functional genomics of Bungarus candidus.</title>
        <authorList>
            <person name="Tsai I.-H."/>
            <person name="Wang Y.M."/>
            <person name="Hsu H.-Y."/>
        </authorList>
    </citation>
    <scope>NUCLEOTIDE SEQUENCE [MRNA]</scope>
    <source>
        <tissue>Venom gland</tissue>
    </source>
</reference>
<sequence length="85" mass="9592">MSSGGLLLLLGLLTLWAELTPVSSRKRHPDCDKPPDTKICQTVVRAFYYKPSAKRCVQFRYGGCNGNGNHFKSDHLCRCECLEYP</sequence>
<feature type="signal peptide" evidence="1">
    <location>
        <begin position="1"/>
        <end position="24"/>
    </location>
</feature>
<feature type="chain" id="PRO_0000271460" description="Kunitz-type serine protease inhibitor homolog beta-bungarotoxin B2a chain">
    <location>
        <begin position="25"/>
        <end position="85"/>
    </location>
</feature>
<feature type="domain" description="BPTI/Kunitz inhibitor" evidence="2">
    <location>
        <begin position="31"/>
        <end position="81"/>
    </location>
</feature>
<feature type="disulfide bond" evidence="2">
    <location>
        <begin position="31"/>
        <end position="81"/>
    </location>
</feature>
<feature type="disulfide bond" evidence="2">
    <location>
        <begin position="40"/>
        <end position="64"/>
    </location>
</feature>
<feature type="disulfide bond" evidence="2">
    <location>
        <begin position="56"/>
        <end position="77"/>
    </location>
</feature>
<feature type="disulfide bond" description="Interchain (with an A chain)" evidence="2">
    <location>
        <position position="79"/>
    </location>
</feature>